<protein>
    <recommendedName>
        <fullName evidence="1">Multidrug resistance protein MdtB</fullName>
    </recommendedName>
    <alternativeName>
        <fullName evidence="1">Multidrug transporter MdtB</fullName>
    </alternativeName>
</protein>
<feature type="chain" id="PRO_1000184866" description="Multidrug resistance protein MdtB">
    <location>
        <begin position="1"/>
        <end position="1040"/>
    </location>
</feature>
<feature type="transmembrane region" description="Helical" evidence="1">
    <location>
        <begin position="16"/>
        <end position="36"/>
    </location>
</feature>
<feature type="transmembrane region" description="Helical" evidence="1">
    <location>
        <begin position="347"/>
        <end position="367"/>
    </location>
</feature>
<feature type="transmembrane region" description="Helical" evidence="1">
    <location>
        <begin position="369"/>
        <end position="389"/>
    </location>
</feature>
<feature type="transmembrane region" description="Helical" evidence="1">
    <location>
        <begin position="396"/>
        <end position="416"/>
    </location>
</feature>
<feature type="transmembrane region" description="Helical" evidence="1">
    <location>
        <begin position="440"/>
        <end position="460"/>
    </location>
</feature>
<feature type="transmembrane region" description="Helical" evidence="1">
    <location>
        <begin position="472"/>
        <end position="492"/>
    </location>
</feature>
<feature type="transmembrane region" description="Helical" evidence="1">
    <location>
        <begin position="537"/>
        <end position="557"/>
    </location>
</feature>
<feature type="transmembrane region" description="Helical" evidence="1">
    <location>
        <begin position="863"/>
        <end position="883"/>
    </location>
</feature>
<feature type="transmembrane region" description="Helical" evidence="1">
    <location>
        <begin position="888"/>
        <end position="908"/>
    </location>
</feature>
<feature type="transmembrane region" description="Helical" evidence="1">
    <location>
        <begin position="911"/>
        <end position="931"/>
    </location>
</feature>
<feature type="transmembrane region" description="Helical" evidence="1">
    <location>
        <begin position="968"/>
        <end position="988"/>
    </location>
</feature>
<feature type="transmembrane region" description="Helical" evidence="1">
    <location>
        <begin position="998"/>
        <end position="1018"/>
    </location>
</feature>
<proteinExistence type="evidence at transcript level"/>
<dbReference type="EMBL" id="CU928162">
    <property type="protein sequence ID" value="CAR08604.2"/>
    <property type="molecule type" value="Genomic_DNA"/>
</dbReference>
<dbReference type="RefSeq" id="WP_001197873.1">
    <property type="nucleotide sequence ID" value="NC_011745.1"/>
</dbReference>
<dbReference type="SMR" id="B7MWY8"/>
<dbReference type="KEGG" id="ecq:ECED1_2421"/>
<dbReference type="HOGENOM" id="CLU_002755_1_2_6"/>
<dbReference type="Proteomes" id="UP000000748">
    <property type="component" value="Chromosome"/>
</dbReference>
<dbReference type="GO" id="GO:0005886">
    <property type="term" value="C:plasma membrane"/>
    <property type="evidence" value="ECO:0007669"/>
    <property type="project" value="UniProtKB-SubCell"/>
</dbReference>
<dbReference type="GO" id="GO:0042910">
    <property type="term" value="F:xenobiotic transmembrane transporter activity"/>
    <property type="evidence" value="ECO:0007669"/>
    <property type="project" value="TreeGrafter"/>
</dbReference>
<dbReference type="FunFam" id="1.20.1640.10:FF:000001">
    <property type="entry name" value="Efflux pump membrane transporter"/>
    <property type="match status" value="1"/>
</dbReference>
<dbReference type="FunFam" id="3.30.70.1430:FF:000001">
    <property type="entry name" value="Efflux pump membrane transporter"/>
    <property type="match status" value="1"/>
</dbReference>
<dbReference type="FunFam" id="3.30.2090.10:FF:000003">
    <property type="entry name" value="Multidrug resistance protein MdtB"/>
    <property type="match status" value="1"/>
</dbReference>
<dbReference type="Gene3D" id="3.30.70.1430">
    <property type="entry name" value="Multidrug efflux transporter AcrB pore domain"/>
    <property type="match status" value="2"/>
</dbReference>
<dbReference type="Gene3D" id="3.30.70.1440">
    <property type="entry name" value="Multidrug efflux transporter AcrB pore domain"/>
    <property type="match status" value="1"/>
</dbReference>
<dbReference type="Gene3D" id="3.30.70.1320">
    <property type="entry name" value="Multidrug efflux transporter AcrB pore domain like"/>
    <property type="match status" value="1"/>
</dbReference>
<dbReference type="Gene3D" id="3.30.2090.10">
    <property type="entry name" value="Multidrug efflux transporter AcrB TolC docking domain, DN and DC subdomains"/>
    <property type="match status" value="2"/>
</dbReference>
<dbReference type="Gene3D" id="1.20.1640.10">
    <property type="entry name" value="Multidrug efflux transporter AcrB transmembrane domain"/>
    <property type="match status" value="2"/>
</dbReference>
<dbReference type="HAMAP" id="MF_01423">
    <property type="entry name" value="MdtB"/>
    <property type="match status" value="1"/>
</dbReference>
<dbReference type="InterPro" id="IPR027463">
    <property type="entry name" value="AcrB_DN_DC_subdom"/>
</dbReference>
<dbReference type="InterPro" id="IPR001036">
    <property type="entry name" value="Acrflvin-R"/>
</dbReference>
<dbReference type="InterPro" id="IPR022831">
    <property type="entry name" value="Multidrug-R_MdtB"/>
</dbReference>
<dbReference type="NCBIfam" id="NF007798">
    <property type="entry name" value="PRK10503.1"/>
    <property type="match status" value="1"/>
</dbReference>
<dbReference type="NCBIfam" id="NF033617">
    <property type="entry name" value="RND_permease_2"/>
    <property type="match status" value="1"/>
</dbReference>
<dbReference type="PANTHER" id="PTHR32063">
    <property type="match status" value="1"/>
</dbReference>
<dbReference type="PANTHER" id="PTHR32063:SF21">
    <property type="entry name" value="MULTIDRUG RESISTANCE PROTEIN MDTB"/>
    <property type="match status" value="1"/>
</dbReference>
<dbReference type="Pfam" id="PF00873">
    <property type="entry name" value="ACR_tran"/>
    <property type="match status" value="1"/>
</dbReference>
<dbReference type="PRINTS" id="PR00702">
    <property type="entry name" value="ACRIFLAVINRP"/>
</dbReference>
<dbReference type="SUPFAM" id="SSF82693">
    <property type="entry name" value="Multidrug efflux transporter AcrB pore domain, PN1, PN2, PC1 and PC2 subdomains"/>
    <property type="match status" value="3"/>
</dbReference>
<dbReference type="SUPFAM" id="SSF82714">
    <property type="entry name" value="Multidrug efflux transporter AcrB TolC docking domain, DN and DC subdomains"/>
    <property type="match status" value="2"/>
</dbReference>
<dbReference type="SUPFAM" id="SSF82866">
    <property type="entry name" value="Multidrug efflux transporter AcrB transmembrane domain"/>
    <property type="match status" value="2"/>
</dbReference>
<sequence length="1040" mass="112065">MQVLPPSSTGGPSRLFIMRPVATTLLMVAILLAGIIGYRALPVSALPEVDYPTIQVVTLYPGASPDVMTSAVTAPLERQFGQMSGLKQMSSQSSGGASVITLQFQLTLPLDVAEQEVQAAINAATNLLPSDLPNPPVYSKVNPADPPIMTLAVTSTAMPMTQVEDMVETRVAQKISQISGVGLVTLSGGQRPAVRVKLNAQAIAALGLTSETVRTAITGANVNSAKGSLDGPSRAVTLSANDQMQSAEEYRQLIIAYQNGAPIRLGDVATVEQGAENSWLGAWANKEQAIVMNVQRQPGANIISTADSIRQMLPQLTESLPKSVKVTVLSDRTTNIRASVDDTQFELMMAIALVVMIIYLFLRNIPATIIPGVAVPLSLIGTFAVMVFLDFSINNLTLMALTIATGFVVDDAIVVIENISRYIEKGEKPLAAALKGAGEIGFTIISLTFSLIAVLIPLLFMGDIVGRLFREFAITLAVAILISAVVSLTLTPMMCARMLSQESLRKQNRFSRASEKMFDRIIAAYGRGLAKVLNHPWLTLSVALSTLLLSVLLWVFIPKGFFPVQDNGIIQGTLQAPQSSSFANMAQRQRQVADVILQDPAVQSLTSFVGVDGTNPSLNSARLQINLKPLDERDDRVQKVIARLQTAVDKVPGVDLFLQPTQDLTIDTQVSRTQYQFTLQATSLDALSTWVPQLMEKLQQLPQLSDVSSDWQDKGLVAYVNVDRDSASRLGISMADVDNALYNAFGQRLISTIYTQANQYRVVLEHNTENTPGLAALDTIRLTSSDGGVVPLSSIAKIEPRFAPLSINHLDQFPVTTISFNVPDNYSLGDAVQAIMDTEKTLNLPVDITTQFQGSTLAFQSALGSTVWLIVAAVVAMYIVLGILYESFIHPITILSTLPTAGVGALLALMIAGSELDVIAIIGIILLIGIVKKNAIMMIDFALAAEREQGMSPREAIYQACLLRFRPILMTTLAALLGALPLMLSTGVGAELRRPLGIGMVGGLIVSQVLTLFTTPVIYLLFDRLALWTKSRFARHEEEA</sequence>
<accession>B7MWY8</accession>
<organism>
    <name type="scientific">Escherichia coli O81 (strain ED1a)</name>
    <dbReference type="NCBI Taxonomy" id="585397"/>
    <lineage>
        <taxon>Bacteria</taxon>
        <taxon>Pseudomonadati</taxon>
        <taxon>Pseudomonadota</taxon>
        <taxon>Gammaproteobacteria</taxon>
        <taxon>Enterobacterales</taxon>
        <taxon>Enterobacteriaceae</taxon>
        <taxon>Escherichia</taxon>
    </lineage>
</organism>
<reference key="1">
    <citation type="journal article" date="2009" name="PLoS Genet.">
        <title>Organised genome dynamics in the Escherichia coli species results in highly diverse adaptive paths.</title>
        <authorList>
            <person name="Touchon M."/>
            <person name="Hoede C."/>
            <person name="Tenaillon O."/>
            <person name="Barbe V."/>
            <person name="Baeriswyl S."/>
            <person name="Bidet P."/>
            <person name="Bingen E."/>
            <person name="Bonacorsi S."/>
            <person name="Bouchier C."/>
            <person name="Bouvet O."/>
            <person name="Calteau A."/>
            <person name="Chiapello H."/>
            <person name="Clermont O."/>
            <person name="Cruveiller S."/>
            <person name="Danchin A."/>
            <person name="Diard M."/>
            <person name="Dossat C."/>
            <person name="Karoui M.E."/>
            <person name="Frapy E."/>
            <person name="Garry L."/>
            <person name="Ghigo J.M."/>
            <person name="Gilles A.M."/>
            <person name="Johnson J."/>
            <person name="Le Bouguenec C."/>
            <person name="Lescat M."/>
            <person name="Mangenot S."/>
            <person name="Martinez-Jehanne V."/>
            <person name="Matic I."/>
            <person name="Nassif X."/>
            <person name="Oztas S."/>
            <person name="Petit M.A."/>
            <person name="Pichon C."/>
            <person name="Rouy Z."/>
            <person name="Ruf C.S."/>
            <person name="Schneider D."/>
            <person name="Tourret J."/>
            <person name="Vacherie B."/>
            <person name="Vallenet D."/>
            <person name="Medigue C."/>
            <person name="Rocha E.P.C."/>
            <person name="Denamur E."/>
        </authorList>
    </citation>
    <scope>NUCLEOTIDE SEQUENCE [LARGE SCALE GENOMIC DNA]</scope>
    <source>
        <strain>ED1a</strain>
    </source>
</reference>
<comment type="function">
    <text evidence="1">The MdtABC tripartite complex confers resistance against novobiocin and deoxycholate.</text>
</comment>
<comment type="subunit">
    <text evidence="1">Part of a tripartite efflux system composed of MdtA, MdtB and MdtC. MdtB forms a heteromultimer with MdtC.</text>
</comment>
<comment type="subcellular location">
    <subcellularLocation>
        <location evidence="1">Cell inner membrane</location>
        <topology evidence="1">Multi-pass membrane protein</topology>
    </subcellularLocation>
</comment>
<comment type="induction">
    <text>The mdtABC operon is transcriptionally activated by BaeR.</text>
</comment>
<comment type="similarity">
    <text evidence="1">Belongs to the resistance-nodulation-cell division (RND) (TC 2.A.6) family. MdtB subfamily.</text>
</comment>
<evidence type="ECO:0000255" key="1">
    <source>
        <dbReference type="HAMAP-Rule" id="MF_01423"/>
    </source>
</evidence>
<gene>
    <name evidence="1" type="primary">mdtB</name>
    <name type="ordered locus">ECED1_2421</name>
</gene>
<name>MDTB_ECO81</name>
<keyword id="KW-0997">Cell inner membrane</keyword>
<keyword id="KW-1003">Cell membrane</keyword>
<keyword id="KW-0472">Membrane</keyword>
<keyword id="KW-0812">Transmembrane</keyword>
<keyword id="KW-1133">Transmembrane helix</keyword>
<keyword id="KW-0813">Transport</keyword>